<organism>
    <name type="scientific">Arabidopsis thaliana</name>
    <name type="common">Mouse-ear cress</name>
    <dbReference type="NCBI Taxonomy" id="3702"/>
    <lineage>
        <taxon>Eukaryota</taxon>
        <taxon>Viridiplantae</taxon>
        <taxon>Streptophyta</taxon>
        <taxon>Embryophyta</taxon>
        <taxon>Tracheophyta</taxon>
        <taxon>Spermatophyta</taxon>
        <taxon>Magnoliopsida</taxon>
        <taxon>eudicotyledons</taxon>
        <taxon>Gunneridae</taxon>
        <taxon>Pentapetalae</taxon>
        <taxon>rosids</taxon>
        <taxon>malvids</taxon>
        <taxon>Brassicales</taxon>
        <taxon>Brassicaceae</taxon>
        <taxon>Camelineae</taxon>
        <taxon>Arabidopsis</taxon>
    </lineage>
</organism>
<protein>
    <recommendedName>
        <fullName>Uroporphyrinogen decarboxylase 2, chloroplastic</fullName>
        <shortName>UPD2</shortName>
        <shortName>URO-D2</shortName>
        <ecNumber>4.1.1.37</ecNumber>
    </recommendedName>
</protein>
<name>DCUP2_ARATH</name>
<keyword id="KW-0149">Chlorophyll biosynthesis</keyword>
<keyword id="KW-0150">Chloroplast</keyword>
<keyword id="KW-0210">Decarboxylase</keyword>
<keyword id="KW-0456">Lyase</keyword>
<keyword id="KW-0934">Plastid</keyword>
<keyword id="KW-0627">Porphyrin biosynthesis</keyword>
<keyword id="KW-1185">Reference proteome</keyword>
<keyword id="KW-0809">Transit peptide</keyword>
<gene>
    <name type="primary">HEME2</name>
    <name type="ordered locus">At2g40490</name>
    <name type="ORF">T2P4.16</name>
</gene>
<evidence type="ECO:0000250" key="1"/>
<evidence type="ECO:0000255" key="2"/>
<evidence type="ECO:0000269" key="3">
    <source>
    </source>
</evidence>
<evidence type="ECO:0000305" key="4"/>
<proteinExistence type="evidence at transcript level"/>
<accession>O22886</accession>
<comment type="function">
    <text evidence="1">Catalyzes the decarboxylation of four acetate groups of uroporphyrinogen-III to yield coproporphyrinogen-III.</text>
</comment>
<comment type="catalytic activity">
    <reaction>
        <text>uroporphyrinogen III + 4 H(+) = coproporphyrinogen III + 4 CO2</text>
        <dbReference type="Rhea" id="RHEA:19865"/>
        <dbReference type="ChEBI" id="CHEBI:15378"/>
        <dbReference type="ChEBI" id="CHEBI:16526"/>
        <dbReference type="ChEBI" id="CHEBI:57308"/>
        <dbReference type="ChEBI" id="CHEBI:57309"/>
        <dbReference type="EC" id="4.1.1.37"/>
    </reaction>
</comment>
<comment type="pathway">
    <text>Porphyrin-containing compound metabolism; protoporphyrin-IX biosynthesis; coproporphyrinogen-III from 5-aminolevulinate: step 4/4.</text>
</comment>
<comment type="pathway">
    <text>Porphyrin-containing compound metabolism; chlorophyll biosynthesis.</text>
</comment>
<comment type="subunit">
    <text evidence="1">Homodimer.</text>
</comment>
<comment type="subcellular location">
    <subcellularLocation>
        <location evidence="4">Plastid</location>
        <location evidence="4">Chloroplast</location>
    </subcellularLocation>
</comment>
<comment type="induction">
    <text evidence="3">Up-regulated by light. Not regulated by circadian rhythm.</text>
</comment>
<comment type="similarity">
    <text evidence="4">Belongs to the uroporphyrinogen decarboxylase family.</text>
</comment>
<reference key="1">
    <citation type="journal article" date="1999" name="Nature">
        <title>Sequence and analysis of chromosome 2 of the plant Arabidopsis thaliana.</title>
        <authorList>
            <person name="Lin X."/>
            <person name="Kaul S."/>
            <person name="Rounsley S.D."/>
            <person name="Shea T.P."/>
            <person name="Benito M.-I."/>
            <person name="Town C.D."/>
            <person name="Fujii C.Y."/>
            <person name="Mason T.M."/>
            <person name="Bowman C.L."/>
            <person name="Barnstead M.E."/>
            <person name="Feldblyum T.V."/>
            <person name="Buell C.R."/>
            <person name="Ketchum K.A."/>
            <person name="Lee J.J."/>
            <person name="Ronning C.M."/>
            <person name="Koo H.L."/>
            <person name="Moffat K.S."/>
            <person name="Cronin L.A."/>
            <person name="Shen M."/>
            <person name="Pai G."/>
            <person name="Van Aken S."/>
            <person name="Umayam L."/>
            <person name="Tallon L.J."/>
            <person name="Gill J.E."/>
            <person name="Adams M.D."/>
            <person name="Carrera A.J."/>
            <person name="Creasy T.H."/>
            <person name="Goodman H.M."/>
            <person name="Somerville C.R."/>
            <person name="Copenhaver G.P."/>
            <person name="Preuss D."/>
            <person name="Nierman W.C."/>
            <person name="White O."/>
            <person name="Eisen J.A."/>
            <person name="Salzberg S.L."/>
            <person name="Fraser C.M."/>
            <person name="Venter J.C."/>
        </authorList>
    </citation>
    <scope>NUCLEOTIDE SEQUENCE [LARGE SCALE GENOMIC DNA]</scope>
    <source>
        <strain>cv. Columbia</strain>
    </source>
</reference>
<reference key="2">
    <citation type="journal article" date="2017" name="Plant J.">
        <title>Araport11: a complete reannotation of the Arabidopsis thaliana reference genome.</title>
        <authorList>
            <person name="Cheng C.Y."/>
            <person name="Krishnakumar V."/>
            <person name="Chan A.P."/>
            <person name="Thibaud-Nissen F."/>
            <person name="Schobel S."/>
            <person name="Town C.D."/>
        </authorList>
    </citation>
    <scope>GENOME REANNOTATION</scope>
    <source>
        <strain>cv. Columbia</strain>
    </source>
</reference>
<reference key="3">
    <citation type="journal article" date="2003" name="Science">
        <title>Empirical analysis of transcriptional activity in the Arabidopsis genome.</title>
        <authorList>
            <person name="Yamada K."/>
            <person name="Lim J."/>
            <person name="Dale J.M."/>
            <person name="Chen H."/>
            <person name="Shinn P."/>
            <person name="Palm C.J."/>
            <person name="Southwick A.M."/>
            <person name="Wu H.C."/>
            <person name="Kim C.J."/>
            <person name="Nguyen M."/>
            <person name="Pham P.K."/>
            <person name="Cheuk R.F."/>
            <person name="Karlin-Newmann G."/>
            <person name="Liu S.X."/>
            <person name="Lam B."/>
            <person name="Sakano H."/>
            <person name="Wu T."/>
            <person name="Yu G."/>
            <person name="Miranda M."/>
            <person name="Quach H.L."/>
            <person name="Tripp M."/>
            <person name="Chang C.H."/>
            <person name="Lee J.M."/>
            <person name="Toriumi M.J."/>
            <person name="Chan M.M."/>
            <person name="Tang C.C."/>
            <person name="Onodera C.S."/>
            <person name="Deng J.M."/>
            <person name="Akiyama K."/>
            <person name="Ansari Y."/>
            <person name="Arakawa T."/>
            <person name="Banh J."/>
            <person name="Banno F."/>
            <person name="Bowser L."/>
            <person name="Brooks S.Y."/>
            <person name="Carninci P."/>
            <person name="Chao Q."/>
            <person name="Choy N."/>
            <person name="Enju A."/>
            <person name="Goldsmith A.D."/>
            <person name="Gurjal M."/>
            <person name="Hansen N.F."/>
            <person name="Hayashizaki Y."/>
            <person name="Johnson-Hopson C."/>
            <person name="Hsuan V.W."/>
            <person name="Iida K."/>
            <person name="Karnes M."/>
            <person name="Khan S."/>
            <person name="Koesema E."/>
            <person name="Ishida J."/>
            <person name="Jiang P.X."/>
            <person name="Jones T."/>
            <person name="Kawai J."/>
            <person name="Kamiya A."/>
            <person name="Meyers C."/>
            <person name="Nakajima M."/>
            <person name="Narusaka M."/>
            <person name="Seki M."/>
            <person name="Sakurai T."/>
            <person name="Satou M."/>
            <person name="Tamse R."/>
            <person name="Vaysberg M."/>
            <person name="Wallender E.K."/>
            <person name="Wong C."/>
            <person name="Yamamura Y."/>
            <person name="Yuan S."/>
            <person name="Shinozaki K."/>
            <person name="Davis R.W."/>
            <person name="Theologis A."/>
            <person name="Ecker J.R."/>
        </authorList>
    </citation>
    <scope>NUCLEOTIDE SEQUENCE [LARGE SCALE MRNA]</scope>
    <source>
        <strain>cv. Columbia</strain>
    </source>
</reference>
<reference key="4">
    <citation type="journal article" date="2003" name="Plant Mol. Biol.">
        <title>Genome organization in Arabidopsis thaliana: a survey for genes involved in isoprenoid and chlorophyll metabolism.</title>
        <authorList>
            <person name="Lange B.M."/>
            <person name="Ghassemian M."/>
        </authorList>
    </citation>
    <scope>IDENTIFICATION</scope>
</reference>
<reference key="5">
    <citation type="journal article" date="2004" name="Plant Physiol.">
        <title>Gene expression profiling of the tetrapyrrole metabolic pathway in Arabidopsis with a mini-array system.</title>
        <authorList>
            <person name="Matsumoto F."/>
            <person name="Obayashi T."/>
            <person name="Sasaki-Sekimoto Y."/>
            <person name="Ohta H."/>
            <person name="Takamiya K."/>
            <person name="Masuda T."/>
        </authorList>
    </citation>
    <scope>INDUCTION BY LIGHT</scope>
</reference>
<feature type="transit peptide" description="Chloroplast" evidence="2">
    <location>
        <begin position="1"/>
        <end status="unknown"/>
    </location>
</feature>
<feature type="chain" id="PRO_0000036329" description="Uroporphyrinogen decarboxylase 2, chloroplastic">
    <location>
        <begin status="unknown"/>
        <end position="394"/>
    </location>
</feature>
<feature type="binding site" evidence="1">
    <location>
        <begin position="74"/>
        <end position="78"/>
    </location>
    <ligand>
        <name>substrate</name>
    </ligand>
</feature>
<feature type="binding site" evidence="1">
    <location>
        <position position="93"/>
    </location>
    <ligand>
        <name>substrate</name>
    </ligand>
</feature>
<feature type="binding site" evidence="1">
    <location>
        <position position="123"/>
    </location>
    <ligand>
        <name>substrate</name>
    </ligand>
</feature>
<feature type="binding site" evidence="1">
    <location>
        <position position="124"/>
    </location>
    <ligand>
        <name>substrate</name>
    </ligand>
</feature>
<feature type="binding site" evidence="1">
    <location>
        <position position="201"/>
    </location>
    <ligand>
        <name>substrate</name>
    </ligand>
</feature>
<feature type="binding site" evidence="1">
    <location>
        <position position="256"/>
    </location>
    <ligand>
        <name>substrate</name>
    </ligand>
</feature>
<feature type="binding site" evidence="1">
    <location>
        <position position="371"/>
    </location>
    <ligand>
        <name>substrate</name>
    </ligand>
</feature>
<feature type="site" description="Transition state stabilizer" evidence="1">
    <location>
        <position position="124"/>
    </location>
</feature>
<sequence>MSILQVSTSSLSSSTLLSISPRKSLSSTKSCRIVRCSVEGTTVTERKVSATSEPLLLRAVKGEVVDRPPVWLMRQAGRYMKSYQTLCEKYPSFRDRSENADLVVEISLQPWKVFKPDGVILFSDILTPLSGMNIPFDIVKGKGPIIFNPPQSAADVAQVREFVPEESVPYVGEALRRLRNEVNNEAAVLGFVGAPFTLSSYVIEGGSSKNFTQIKRLAFSQPKVLHALLQKFTTSMITYIRYQADSGAQAVQIFDSWATELSPVDFEEFSLPYLKQIVEAVKQTHPNLPLILYASGSGGLLERLARTGVDVVSLDWTVDMAEGRDRLGRDIAVQGNVDPGVLFGSKEFITSRIHDTVKKAGRDKHILNLGHGIKVGTPEENVAHFFEVAQEIRY</sequence>
<dbReference type="EC" id="4.1.1.37"/>
<dbReference type="EMBL" id="AC002336">
    <property type="protein sequence ID" value="AAB87587.1"/>
    <property type="molecule type" value="Genomic_DNA"/>
</dbReference>
<dbReference type="EMBL" id="CP002685">
    <property type="protein sequence ID" value="AEC09837.1"/>
    <property type="molecule type" value="Genomic_DNA"/>
</dbReference>
<dbReference type="EMBL" id="AY142634">
    <property type="protein sequence ID" value="AAN13092.1"/>
    <property type="molecule type" value="mRNA"/>
</dbReference>
<dbReference type="PIR" id="B84830">
    <property type="entry name" value="B84830"/>
</dbReference>
<dbReference type="RefSeq" id="NP_181581.1">
    <property type="nucleotide sequence ID" value="NM_129611.5"/>
</dbReference>
<dbReference type="SMR" id="O22886"/>
<dbReference type="BioGRID" id="3982">
    <property type="interactions" value="13"/>
</dbReference>
<dbReference type="FunCoup" id="O22886">
    <property type="interactions" value="3790"/>
</dbReference>
<dbReference type="STRING" id="3702.O22886"/>
<dbReference type="iPTMnet" id="O22886"/>
<dbReference type="PaxDb" id="3702-AT2G40490.1"/>
<dbReference type="ProteomicsDB" id="224586"/>
<dbReference type="EnsemblPlants" id="AT2G40490.1">
    <property type="protein sequence ID" value="AT2G40490.1"/>
    <property type="gene ID" value="AT2G40490"/>
</dbReference>
<dbReference type="GeneID" id="818644"/>
<dbReference type="Gramene" id="AT2G40490.1">
    <property type="protein sequence ID" value="AT2G40490.1"/>
    <property type="gene ID" value="AT2G40490"/>
</dbReference>
<dbReference type="KEGG" id="ath:AT2G40490"/>
<dbReference type="Araport" id="AT2G40490"/>
<dbReference type="TAIR" id="AT2G40490">
    <property type="gene designation" value="HEME2"/>
</dbReference>
<dbReference type="eggNOG" id="KOG2872">
    <property type="taxonomic scope" value="Eukaryota"/>
</dbReference>
<dbReference type="HOGENOM" id="CLU_040933_0_2_1"/>
<dbReference type="InParanoid" id="O22886"/>
<dbReference type="OMA" id="LWLMRQA"/>
<dbReference type="PhylomeDB" id="O22886"/>
<dbReference type="BioCyc" id="ARA:AT2G40490-MONOMER"/>
<dbReference type="UniPathway" id="UPA00251">
    <property type="reaction ID" value="UER00321"/>
</dbReference>
<dbReference type="UniPathway" id="UPA00668"/>
<dbReference type="PRO" id="PR:O22886"/>
<dbReference type="Proteomes" id="UP000006548">
    <property type="component" value="Chromosome 2"/>
</dbReference>
<dbReference type="ExpressionAtlas" id="O22886">
    <property type="expression patterns" value="baseline and differential"/>
</dbReference>
<dbReference type="GO" id="GO:0009507">
    <property type="term" value="C:chloroplast"/>
    <property type="evidence" value="ECO:0007005"/>
    <property type="project" value="TAIR"/>
</dbReference>
<dbReference type="GO" id="GO:0009941">
    <property type="term" value="C:chloroplast envelope"/>
    <property type="evidence" value="ECO:0007005"/>
    <property type="project" value="TAIR"/>
</dbReference>
<dbReference type="GO" id="GO:0009570">
    <property type="term" value="C:chloroplast stroma"/>
    <property type="evidence" value="ECO:0007005"/>
    <property type="project" value="TAIR"/>
</dbReference>
<dbReference type="GO" id="GO:0005794">
    <property type="term" value="C:Golgi apparatus"/>
    <property type="evidence" value="ECO:0007005"/>
    <property type="project" value="TAIR"/>
</dbReference>
<dbReference type="GO" id="GO:0004853">
    <property type="term" value="F:uroporphyrinogen decarboxylase activity"/>
    <property type="evidence" value="ECO:0007669"/>
    <property type="project" value="UniProtKB-EC"/>
</dbReference>
<dbReference type="GO" id="GO:0015995">
    <property type="term" value="P:chlorophyll biosynthetic process"/>
    <property type="evidence" value="ECO:0007669"/>
    <property type="project" value="UniProtKB-UniPathway"/>
</dbReference>
<dbReference type="GO" id="GO:0006782">
    <property type="term" value="P:protoporphyrinogen IX biosynthetic process"/>
    <property type="evidence" value="ECO:0007669"/>
    <property type="project" value="UniProtKB-UniPathway"/>
</dbReference>
<dbReference type="CDD" id="cd00717">
    <property type="entry name" value="URO-D"/>
    <property type="match status" value="1"/>
</dbReference>
<dbReference type="FunFam" id="3.20.20.210:FF:000006">
    <property type="entry name" value="Uroporphyrinogen decarboxylase"/>
    <property type="match status" value="1"/>
</dbReference>
<dbReference type="Gene3D" id="3.20.20.210">
    <property type="match status" value="1"/>
</dbReference>
<dbReference type="HAMAP" id="MF_00218">
    <property type="entry name" value="URO_D"/>
    <property type="match status" value="1"/>
</dbReference>
<dbReference type="InterPro" id="IPR038071">
    <property type="entry name" value="UROD/MetE-like_sf"/>
</dbReference>
<dbReference type="InterPro" id="IPR006361">
    <property type="entry name" value="Uroporphyrinogen_deCO2ase_HemE"/>
</dbReference>
<dbReference type="InterPro" id="IPR000257">
    <property type="entry name" value="Uroporphyrinogen_deCOase"/>
</dbReference>
<dbReference type="NCBIfam" id="TIGR01464">
    <property type="entry name" value="hemE"/>
    <property type="match status" value="1"/>
</dbReference>
<dbReference type="PANTHER" id="PTHR21091">
    <property type="entry name" value="METHYLTETRAHYDROFOLATE:HOMOCYSTEINE METHYLTRANSFERASE RELATED"/>
    <property type="match status" value="1"/>
</dbReference>
<dbReference type="PANTHER" id="PTHR21091:SF169">
    <property type="entry name" value="UROPORPHYRINOGEN DECARBOXYLASE"/>
    <property type="match status" value="1"/>
</dbReference>
<dbReference type="Pfam" id="PF01208">
    <property type="entry name" value="URO-D"/>
    <property type="match status" value="1"/>
</dbReference>
<dbReference type="SUPFAM" id="SSF51726">
    <property type="entry name" value="UROD/MetE-like"/>
    <property type="match status" value="1"/>
</dbReference>
<dbReference type="PROSITE" id="PS00906">
    <property type="entry name" value="UROD_1"/>
    <property type="match status" value="1"/>
</dbReference>
<dbReference type="PROSITE" id="PS00907">
    <property type="entry name" value="UROD_2"/>
    <property type="match status" value="1"/>
</dbReference>